<reference key="1">
    <citation type="journal article" date="2007" name="Archaea">
        <title>The genome of Hyperthermus butylicus: a sulfur-reducing, peptide fermenting, neutrophilic Crenarchaeote growing up to 108 degrees C.</title>
        <authorList>
            <person name="Bruegger K."/>
            <person name="Chen L."/>
            <person name="Stark M."/>
            <person name="Zibat A."/>
            <person name="Redder P."/>
            <person name="Ruepp A."/>
            <person name="Awayez M."/>
            <person name="She Q."/>
            <person name="Garrett R.A."/>
            <person name="Klenk H.-P."/>
        </authorList>
    </citation>
    <scope>NUCLEOTIDE SEQUENCE [LARGE SCALE GENOMIC DNA]</scope>
    <source>
        <strain>DSM 5456 / JCM 9403 / PLM1-5</strain>
    </source>
</reference>
<dbReference type="EMBL" id="CP000493">
    <property type="protein sequence ID" value="ABM80297.1"/>
    <property type="molecule type" value="Genomic_DNA"/>
</dbReference>
<dbReference type="RefSeq" id="WP_011821615.1">
    <property type="nucleotide sequence ID" value="NC_008818.1"/>
</dbReference>
<dbReference type="SMR" id="A2BJY6"/>
<dbReference type="STRING" id="415426.Hbut_0431"/>
<dbReference type="EnsemblBacteria" id="ABM80297">
    <property type="protein sequence ID" value="ABM80297"/>
    <property type="gene ID" value="Hbut_0431"/>
</dbReference>
<dbReference type="GeneID" id="4781671"/>
<dbReference type="KEGG" id="hbu:Hbut_0431"/>
<dbReference type="eggNOG" id="arCOG04185">
    <property type="taxonomic scope" value="Archaea"/>
</dbReference>
<dbReference type="HOGENOM" id="CLU_090139_2_0_2"/>
<dbReference type="OrthoDB" id="6533at2157"/>
<dbReference type="Proteomes" id="UP000002593">
    <property type="component" value="Chromosome"/>
</dbReference>
<dbReference type="GO" id="GO:0022627">
    <property type="term" value="C:cytosolic small ribosomal subunit"/>
    <property type="evidence" value="ECO:0007669"/>
    <property type="project" value="TreeGrafter"/>
</dbReference>
<dbReference type="GO" id="GO:0070181">
    <property type="term" value="F:small ribosomal subunit rRNA binding"/>
    <property type="evidence" value="ECO:0007669"/>
    <property type="project" value="TreeGrafter"/>
</dbReference>
<dbReference type="GO" id="GO:0003735">
    <property type="term" value="F:structural constituent of ribosome"/>
    <property type="evidence" value="ECO:0007669"/>
    <property type="project" value="InterPro"/>
</dbReference>
<dbReference type="GO" id="GO:0006412">
    <property type="term" value="P:translation"/>
    <property type="evidence" value="ECO:0007669"/>
    <property type="project" value="UniProtKB-UniRule"/>
</dbReference>
<dbReference type="CDD" id="cd00353">
    <property type="entry name" value="Ribosomal_S15p_S13e"/>
    <property type="match status" value="1"/>
</dbReference>
<dbReference type="FunFam" id="1.10.287.10:FF:000003">
    <property type="entry name" value="40S ribosomal protein S13"/>
    <property type="match status" value="1"/>
</dbReference>
<dbReference type="Gene3D" id="4.10.860.130">
    <property type="match status" value="1"/>
</dbReference>
<dbReference type="Gene3D" id="1.10.287.10">
    <property type="entry name" value="S15/NS1, RNA-binding"/>
    <property type="match status" value="1"/>
</dbReference>
<dbReference type="HAMAP" id="MF_01343_A">
    <property type="entry name" value="Ribosomal_uS15_A"/>
    <property type="match status" value="1"/>
</dbReference>
<dbReference type="InterPro" id="IPR000589">
    <property type="entry name" value="Ribosomal_uS15"/>
</dbReference>
<dbReference type="InterPro" id="IPR023029">
    <property type="entry name" value="Ribosomal_uS15_arc_euk"/>
</dbReference>
<dbReference type="InterPro" id="IPR012606">
    <property type="entry name" value="Ribosomal_uS15_N"/>
</dbReference>
<dbReference type="InterPro" id="IPR009068">
    <property type="entry name" value="uS15_NS1_RNA-bd_sf"/>
</dbReference>
<dbReference type="NCBIfam" id="NF006331">
    <property type="entry name" value="PRK08561.1"/>
    <property type="match status" value="1"/>
</dbReference>
<dbReference type="PANTHER" id="PTHR11885">
    <property type="entry name" value="RIBOSOMAL PROTEIN S15P/S13E"/>
    <property type="match status" value="1"/>
</dbReference>
<dbReference type="PANTHER" id="PTHR11885:SF6">
    <property type="entry name" value="SMALL RIBOSOMAL SUBUNIT PROTEIN US15"/>
    <property type="match status" value="1"/>
</dbReference>
<dbReference type="Pfam" id="PF08069">
    <property type="entry name" value="Ribosomal_S13_N"/>
    <property type="match status" value="1"/>
</dbReference>
<dbReference type="Pfam" id="PF00312">
    <property type="entry name" value="Ribosomal_S15"/>
    <property type="match status" value="1"/>
</dbReference>
<dbReference type="SMART" id="SM01386">
    <property type="entry name" value="Ribosomal_S13_N"/>
    <property type="match status" value="1"/>
</dbReference>
<dbReference type="SMART" id="SM01387">
    <property type="entry name" value="Ribosomal_S15"/>
    <property type="match status" value="1"/>
</dbReference>
<dbReference type="SUPFAM" id="SSF47060">
    <property type="entry name" value="S15/NS1 RNA-binding domain"/>
    <property type="match status" value="1"/>
</dbReference>
<dbReference type="PROSITE" id="PS00362">
    <property type="entry name" value="RIBOSOMAL_S15"/>
    <property type="match status" value="1"/>
</dbReference>
<accession>A2BJY6</accession>
<proteinExistence type="inferred from homology"/>
<keyword id="KW-1185">Reference proteome</keyword>
<keyword id="KW-0687">Ribonucleoprotein</keyword>
<keyword id="KW-0689">Ribosomal protein</keyword>
<feature type="chain" id="PRO_0000354223" description="Small ribosomal subunit protein uS15">
    <location>
        <begin position="1"/>
        <end position="161"/>
    </location>
</feature>
<feature type="region of interest" description="Disordered" evidence="2">
    <location>
        <begin position="1"/>
        <end position="22"/>
    </location>
</feature>
<feature type="compositionally biased region" description="Basic residues" evidence="2">
    <location>
        <begin position="1"/>
        <end position="13"/>
    </location>
</feature>
<organism>
    <name type="scientific">Hyperthermus butylicus (strain DSM 5456 / JCM 9403 / PLM1-5)</name>
    <dbReference type="NCBI Taxonomy" id="415426"/>
    <lineage>
        <taxon>Archaea</taxon>
        <taxon>Thermoproteota</taxon>
        <taxon>Thermoprotei</taxon>
        <taxon>Desulfurococcales</taxon>
        <taxon>Pyrodictiaceae</taxon>
        <taxon>Hyperthermus</taxon>
    </lineage>
</organism>
<gene>
    <name evidence="1" type="primary">rps15</name>
    <name type="ordered locus">Hbut_0431</name>
</gene>
<sequence length="161" mass="18545">MAGKRRKKGRSHSTRPATPTVPKWIQYDPEEIEEIIVDLARKGYGPSMIGIILRDQFGIPLVKPILGKSITEVLEERGIKMVVPEDLFRLIEKAVNLRRHLEEHPKDTHAKKGLLDLESKIRRLAEYYKRVGKLPRDWKYDPQQAKLLVAGGLYREEKPAS</sequence>
<name>RS15_HYPBU</name>
<evidence type="ECO:0000255" key="1">
    <source>
        <dbReference type="HAMAP-Rule" id="MF_01343"/>
    </source>
</evidence>
<evidence type="ECO:0000256" key="2">
    <source>
        <dbReference type="SAM" id="MobiDB-lite"/>
    </source>
</evidence>
<evidence type="ECO:0000305" key="3"/>
<protein>
    <recommendedName>
        <fullName evidence="1">Small ribosomal subunit protein uS15</fullName>
    </recommendedName>
    <alternativeName>
        <fullName evidence="3">30S ribosomal protein S15</fullName>
    </alternativeName>
</protein>
<comment type="subunit">
    <text evidence="1">Part of the 30S ribosomal subunit.</text>
</comment>
<comment type="similarity">
    <text evidence="1">Belongs to the universal ribosomal protein uS15 family.</text>
</comment>